<proteinExistence type="evidence at protein level"/>
<protein>
    <recommendedName>
        <fullName>Zinc finger protein 593</fullName>
    </recommendedName>
    <alternativeName>
        <fullName>Zinc finger protein T86</fullName>
    </alternativeName>
</protein>
<gene>
    <name type="primary">Znf593</name>
    <name type="synonym">Zfp593</name>
</gene>
<comment type="function">
    <text evidence="1">Involved in pre-60S ribosomal particles maturation by promoting the nuclear export of the 60S ribosome. Negatively modulates the DNA binding activity of Oct-2 and therefore its transcriptional regulatory activity.</text>
</comment>
<comment type="subunit">
    <text evidence="1">Associates with pre-60S ribosomal particles.</text>
</comment>
<comment type="subcellular location">
    <subcellularLocation>
        <location evidence="1">Nucleus</location>
        <location evidence="1">Nucleolus</location>
    </subcellularLocation>
    <subcellularLocation>
        <location evidence="2">Cytoplasm</location>
    </subcellularLocation>
    <text evidence="2">Shuttles between the nucleus and the cytoplasm.</text>
</comment>
<comment type="domain">
    <text evidence="1">The protein is largely disordered, with the exception of the zinc finger domain.</text>
</comment>
<comment type="similarity">
    <text evidence="5">Belongs to the ZNF593/BUD20 C2H2-type zinc-finger protein family.</text>
</comment>
<comment type="sequence caution" evidence="5">
    <conflict type="erroneous initiation">
        <sequence resource="EMBL-CDS" id="AAH03465"/>
    </conflict>
</comment>
<comment type="sequence caution" evidence="5">
    <conflict type="erroneous initiation">
        <sequence resource="EMBL-CDS" id="BAB23902"/>
    </conflict>
</comment>
<reference key="1">
    <citation type="journal article" date="2005" name="Science">
        <title>The transcriptional landscape of the mammalian genome.</title>
        <authorList>
            <person name="Carninci P."/>
            <person name="Kasukawa T."/>
            <person name="Katayama S."/>
            <person name="Gough J."/>
            <person name="Frith M.C."/>
            <person name="Maeda N."/>
            <person name="Oyama R."/>
            <person name="Ravasi T."/>
            <person name="Lenhard B."/>
            <person name="Wells C."/>
            <person name="Kodzius R."/>
            <person name="Shimokawa K."/>
            <person name="Bajic V.B."/>
            <person name="Brenner S.E."/>
            <person name="Batalov S."/>
            <person name="Forrest A.R."/>
            <person name="Zavolan M."/>
            <person name="Davis M.J."/>
            <person name="Wilming L.G."/>
            <person name="Aidinis V."/>
            <person name="Allen J.E."/>
            <person name="Ambesi-Impiombato A."/>
            <person name="Apweiler R."/>
            <person name="Aturaliya R.N."/>
            <person name="Bailey T.L."/>
            <person name="Bansal M."/>
            <person name="Baxter L."/>
            <person name="Beisel K.W."/>
            <person name="Bersano T."/>
            <person name="Bono H."/>
            <person name="Chalk A.M."/>
            <person name="Chiu K.P."/>
            <person name="Choudhary V."/>
            <person name="Christoffels A."/>
            <person name="Clutterbuck D.R."/>
            <person name="Crowe M.L."/>
            <person name="Dalla E."/>
            <person name="Dalrymple B.P."/>
            <person name="de Bono B."/>
            <person name="Della Gatta G."/>
            <person name="di Bernardo D."/>
            <person name="Down T."/>
            <person name="Engstrom P."/>
            <person name="Fagiolini M."/>
            <person name="Faulkner G."/>
            <person name="Fletcher C.F."/>
            <person name="Fukushima T."/>
            <person name="Furuno M."/>
            <person name="Futaki S."/>
            <person name="Gariboldi M."/>
            <person name="Georgii-Hemming P."/>
            <person name="Gingeras T.R."/>
            <person name="Gojobori T."/>
            <person name="Green R.E."/>
            <person name="Gustincich S."/>
            <person name="Harbers M."/>
            <person name="Hayashi Y."/>
            <person name="Hensch T.K."/>
            <person name="Hirokawa N."/>
            <person name="Hill D."/>
            <person name="Huminiecki L."/>
            <person name="Iacono M."/>
            <person name="Ikeo K."/>
            <person name="Iwama A."/>
            <person name="Ishikawa T."/>
            <person name="Jakt M."/>
            <person name="Kanapin A."/>
            <person name="Katoh M."/>
            <person name="Kawasawa Y."/>
            <person name="Kelso J."/>
            <person name="Kitamura H."/>
            <person name="Kitano H."/>
            <person name="Kollias G."/>
            <person name="Krishnan S.P."/>
            <person name="Kruger A."/>
            <person name="Kummerfeld S.K."/>
            <person name="Kurochkin I.V."/>
            <person name="Lareau L.F."/>
            <person name="Lazarevic D."/>
            <person name="Lipovich L."/>
            <person name="Liu J."/>
            <person name="Liuni S."/>
            <person name="McWilliam S."/>
            <person name="Madan Babu M."/>
            <person name="Madera M."/>
            <person name="Marchionni L."/>
            <person name="Matsuda H."/>
            <person name="Matsuzawa S."/>
            <person name="Miki H."/>
            <person name="Mignone F."/>
            <person name="Miyake S."/>
            <person name="Morris K."/>
            <person name="Mottagui-Tabar S."/>
            <person name="Mulder N."/>
            <person name="Nakano N."/>
            <person name="Nakauchi H."/>
            <person name="Ng P."/>
            <person name="Nilsson R."/>
            <person name="Nishiguchi S."/>
            <person name="Nishikawa S."/>
            <person name="Nori F."/>
            <person name="Ohara O."/>
            <person name="Okazaki Y."/>
            <person name="Orlando V."/>
            <person name="Pang K.C."/>
            <person name="Pavan W.J."/>
            <person name="Pavesi G."/>
            <person name="Pesole G."/>
            <person name="Petrovsky N."/>
            <person name="Piazza S."/>
            <person name="Reed J."/>
            <person name="Reid J.F."/>
            <person name="Ring B.Z."/>
            <person name="Ringwald M."/>
            <person name="Rost B."/>
            <person name="Ruan Y."/>
            <person name="Salzberg S.L."/>
            <person name="Sandelin A."/>
            <person name="Schneider C."/>
            <person name="Schoenbach C."/>
            <person name="Sekiguchi K."/>
            <person name="Semple C.A."/>
            <person name="Seno S."/>
            <person name="Sessa L."/>
            <person name="Sheng Y."/>
            <person name="Shibata Y."/>
            <person name="Shimada H."/>
            <person name="Shimada K."/>
            <person name="Silva D."/>
            <person name="Sinclair B."/>
            <person name="Sperling S."/>
            <person name="Stupka E."/>
            <person name="Sugiura K."/>
            <person name="Sultana R."/>
            <person name="Takenaka Y."/>
            <person name="Taki K."/>
            <person name="Tammoja K."/>
            <person name="Tan S.L."/>
            <person name="Tang S."/>
            <person name="Taylor M.S."/>
            <person name="Tegner J."/>
            <person name="Teichmann S.A."/>
            <person name="Ueda H.R."/>
            <person name="van Nimwegen E."/>
            <person name="Verardo R."/>
            <person name="Wei C.L."/>
            <person name="Yagi K."/>
            <person name="Yamanishi H."/>
            <person name="Zabarovsky E."/>
            <person name="Zhu S."/>
            <person name="Zimmer A."/>
            <person name="Hide W."/>
            <person name="Bult C."/>
            <person name="Grimmond S.M."/>
            <person name="Teasdale R.D."/>
            <person name="Liu E.T."/>
            <person name="Brusic V."/>
            <person name="Quackenbush J."/>
            <person name="Wahlestedt C."/>
            <person name="Mattick J.S."/>
            <person name="Hume D.A."/>
            <person name="Kai C."/>
            <person name="Sasaki D."/>
            <person name="Tomaru Y."/>
            <person name="Fukuda S."/>
            <person name="Kanamori-Katayama M."/>
            <person name="Suzuki M."/>
            <person name="Aoki J."/>
            <person name="Arakawa T."/>
            <person name="Iida J."/>
            <person name="Imamura K."/>
            <person name="Itoh M."/>
            <person name="Kato T."/>
            <person name="Kawaji H."/>
            <person name="Kawagashira N."/>
            <person name="Kawashima T."/>
            <person name="Kojima M."/>
            <person name="Kondo S."/>
            <person name="Konno H."/>
            <person name="Nakano K."/>
            <person name="Ninomiya N."/>
            <person name="Nishio T."/>
            <person name="Okada M."/>
            <person name="Plessy C."/>
            <person name="Shibata K."/>
            <person name="Shiraki T."/>
            <person name="Suzuki S."/>
            <person name="Tagami M."/>
            <person name="Waki K."/>
            <person name="Watahiki A."/>
            <person name="Okamura-Oho Y."/>
            <person name="Suzuki H."/>
            <person name="Kawai J."/>
            <person name="Hayashizaki Y."/>
        </authorList>
    </citation>
    <scope>NUCLEOTIDE SEQUENCE [LARGE SCALE MRNA]</scope>
    <source>
        <strain>C57BL/6J</strain>
        <tissue>Cerebellum</tissue>
        <tissue>Pituitary</tissue>
    </source>
</reference>
<reference key="2">
    <citation type="journal article" date="2009" name="PLoS Biol.">
        <title>Lineage-specific biology revealed by a finished genome assembly of the mouse.</title>
        <authorList>
            <person name="Church D.M."/>
            <person name="Goodstadt L."/>
            <person name="Hillier L.W."/>
            <person name="Zody M.C."/>
            <person name="Goldstein S."/>
            <person name="She X."/>
            <person name="Bult C.J."/>
            <person name="Agarwala R."/>
            <person name="Cherry J.L."/>
            <person name="DiCuccio M."/>
            <person name="Hlavina W."/>
            <person name="Kapustin Y."/>
            <person name="Meric P."/>
            <person name="Maglott D."/>
            <person name="Birtle Z."/>
            <person name="Marques A.C."/>
            <person name="Graves T."/>
            <person name="Zhou S."/>
            <person name="Teague B."/>
            <person name="Potamousis K."/>
            <person name="Churas C."/>
            <person name="Place M."/>
            <person name="Herschleb J."/>
            <person name="Runnheim R."/>
            <person name="Forrest D."/>
            <person name="Amos-Landgraf J."/>
            <person name="Schwartz D.C."/>
            <person name="Cheng Z."/>
            <person name="Lindblad-Toh K."/>
            <person name="Eichler E.E."/>
            <person name="Ponting C.P."/>
        </authorList>
    </citation>
    <scope>NUCLEOTIDE SEQUENCE [LARGE SCALE GENOMIC DNA]</scope>
    <source>
        <strain>C57BL/6J</strain>
    </source>
</reference>
<reference key="3">
    <citation type="journal article" date="2004" name="Genome Res.">
        <title>The status, quality, and expansion of the NIH full-length cDNA project: the Mammalian Gene Collection (MGC).</title>
        <authorList>
            <consortium name="The MGC Project Team"/>
        </authorList>
    </citation>
    <scope>NUCLEOTIDE SEQUENCE [LARGE SCALE MRNA]</scope>
    <source>
        <tissue>Mammary gland</tissue>
    </source>
</reference>
<reference key="4">
    <citation type="journal article" date="2010" name="Cell">
        <title>A tissue-specific atlas of mouse protein phosphorylation and expression.</title>
        <authorList>
            <person name="Huttlin E.L."/>
            <person name="Jedrychowski M.P."/>
            <person name="Elias J.E."/>
            <person name="Goswami T."/>
            <person name="Rad R."/>
            <person name="Beausoleil S.A."/>
            <person name="Villen J."/>
            <person name="Haas W."/>
            <person name="Sowa M.E."/>
            <person name="Gygi S.P."/>
        </authorList>
    </citation>
    <scope>IDENTIFICATION BY MASS SPECTROMETRY [LARGE SCALE ANALYSIS]</scope>
    <source>
        <tissue>Liver</tissue>
        <tissue>Lung</tissue>
        <tissue>Testis</tissue>
    </source>
</reference>
<dbReference type="EMBL" id="AK005247">
    <property type="protein sequence ID" value="BAB23902.1"/>
    <property type="status" value="ALT_INIT"/>
    <property type="molecule type" value="mRNA"/>
</dbReference>
<dbReference type="EMBL" id="AK133585">
    <property type="protein sequence ID" value="BAE21733.1"/>
    <property type="molecule type" value="mRNA"/>
</dbReference>
<dbReference type="EMBL" id="AL627314">
    <property type="status" value="NOT_ANNOTATED_CDS"/>
    <property type="molecule type" value="Genomic_DNA"/>
</dbReference>
<dbReference type="EMBL" id="BC003465">
    <property type="protein sequence ID" value="AAH03465.1"/>
    <property type="status" value="ALT_INIT"/>
    <property type="molecule type" value="mRNA"/>
</dbReference>
<dbReference type="CCDS" id="CCDS51325.1"/>
<dbReference type="RefSeq" id="NP_077177.2">
    <property type="nucleotide sequence ID" value="NM_024215.2"/>
</dbReference>
<dbReference type="SMR" id="Q9DB42"/>
<dbReference type="BioGRID" id="212620">
    <property type="interactions" value="3"/>
</dbReference>
<dbReference type="FunCoup" id="Q9DB42">
    <property type="interactions" value="1082"/>
</dbReference>
<dbReference type="IntAct" id="Q9DB42">
    <property type="interactions" value="2"/>
</dbReference>
<dbReference type="STRING" id="10090.ENSMUSP00000030644"/>
<dbReference type="iPTMnet" id="Q9DB42"/>
<dbReference type="PhosphoSitePlus" id="Q9DB42"/>
<dbReference type="SwissPalm" id="Q9DB42"/>
<dbReference type="jPOST" id="Q9DB42"/>
<dbReference type="PaxDb" id="10090-ENSMUSP00000030644"/>
<dbReference type="PeptideAtlas" id="Q9DB42"/>
<dbReference type="ProteomicsDB" id="299591"/>
<dbReference type="Pumba" id="Q9DB42"/>
<dbReference type="Antibodypedia" id="30564">
    <property type="antibodies" value="72 antibodies from 18 providers"/>
</dbReference>
<dbReference type="DNASU" id="68040"/>
<dbReference type="Ensembl" id="ENSMUST00000030644.8">
    <property type="protein sequence ID" value="ENSMUSP00000030644.8"/>
    <property type="gene ID" value="ENSMUSG00000028840.11"/>
</dbReference>
<dbReference type="GeneID" id="68040"/>
<dbReference type="KEGG" id="mmu:68040"/>
<dbReference type="UCSC" id="uc008vej.1">
    <property type="organism name" value="mouse"/>
</dbReference>
<dbReference type="AGR" id="MGI:1915290"/>
<dbReference type="CTD" id="68040"/>
<dbReference type="MGI" id="MGI:1915290">
    <property type="gene designation" value="Zfp593"/>
</dbReference>
<dbReference type="VEuPathDB" id="HostDB:ENSMUSG00000028840"/>
<dbReference type="eggNOG" id="KOG3408">
    <property type="taxonomic scope" value="Eukaryota"/>
</dbReference>
<dbReference type="GeneTree" id="ENSGT00390000004173"/>
<dbReference type="HOGENOM" id="CLU_117291_1_2_1"/>
<dbReference type="InParanoid" id="Q9DB42"/>
<dbReference type="OMA" id="MKDHFRS"/>
<dbReference type="OrthoDB" id="24683at2759"/>
<dbReference type="PhylomeDB" id="Q9DB42"/>
<dbReference type="TreeFam" id="TF315114"/>
<dbReference type="BioGRID-ORCS" id="68040">
    <property type="hits" value="7 hits in 77 CRISPR screens"/>
</dbReference>
<dbReference type="PRO" id="PR:Q9DB42"/>
<dbReference type="Proteomes" id="UP000000589">
    <property type="component" value="Chromosome 4"/>
</dbReference>
<dbReference type="RNAct" id="Q9DB42">
    <property type="molecule type" value="protein"/>
</dbReference>
<dbReference type="Bgee" id="ENSMUSG00000028840">
    <property type="expression patterns" value="Expressed in paneth cell and 228 other cell types or tissues"/>
</dbReference>
<dbReference type="GO" id="GO:0005737">
    <property type="term" value="C:cytoplasm"/>
    <property type="evidence" value="ECO:0007669"/>
    <property type="project" value="UniProtKB-SubCell"/>
</dbReference>
<dbReference type="GO" id="GO:0005730">
    <property type="term" value="C:nucleolus"/>
    <property type="evidence" value="ECO:0000250"/>
    <property type="project" value="ParkinsonsUK-UCL"/>
</dbReference>
<dbReference type="GO" id="GO:0005654">
    <property type="term" value="C:nucleoplasm"/>
    <property type="evidence" value="ECO:0007669"/>
    <property type="project" value="Ensembl"/>
</dbReference>
<dbReference type="GO" id="GO:0005634">
    <property type="term" value="C:nucleus"/>
    <property type="evidence" value="ECO:0000250"/>
    <property type="project" value="ParkinsonsUK-UCL"/>
</dbReference>
<dbReference type="GO" id="GO:0003677">
    <property type="term" value="F:DNA binding"/>
    <property type="evidence" value="ECO:0007669"/>
    <property type="project" value="UniProtKB-KW"/>
</dbReference>
<dbReference type="GO" id="GO:1990275">
    <property type="term" value="F:preribosome binding"/>
    <property type="evidence" value="ECO:0000250"/>
    <property type="project" value="UniProtKB"/>
</dbReference>
<dbReference type="GO" id="GO:0008270">
    <property type="term" value="F:zinc ion binding"/>
    <property type="evidence" value="ECO:0007669"/>
    <property type="project" value="UniProtKB-KW"/>
</dbReference>
<dbReference type="GO" id="GO:0045944">
    <property type="term" value="P:positive regulation of transcription by RNA polymerase II"/>
    <property type="evidence" value="ECO:0007669"/>
    <property type="project" value="Ensembl"/>
</dbReference>
<dbReference type="GO" id="GO:0042254">
    <property type="term" value="P:ribosome biogenesis"/>
    <property type="evidence" value="ECO:0007669"/>
    <property type="project" value="UniProtKB-KW"/>
</dbReference>
<dbReference type="FunFam" id="3.30.160.60:FF:000299">
    <property type="entry name" value="Zinc finger protein 593"/>
    <property type="match status" value="1"/>
</dbReference>
<dbReference type="Gene3D" id="3.30.160.60">
    <property type="entry name" value="Classic Zinc Finger"/>
    <property type="match status" value="1"/>
</dbReference>
<dbReference type="InterPro" id="IPR051879">
    <property type="entry name" value="C2H2-ZF_Maturation_Protein"/>
</dbReference>
<dbReference type="InterPro" id="IPR003604">
    <property type="entry name" value="Matrin/U1-like-C_Znf_C2H2"/>
</dbReference>
<dbReference type="InterPro" id="IPR022755">
    <property type="entry name" value="Znf_C2H2_jaz"/>
</dbReference>
<dbReference type="InterPro" id="IPR036236">
    <property type="entry name" value="Znf_C2H2_sf"/>
</dbReference>
<dbReference type="InterPro" id="IPR013087">
    <property type="entry name" value="Znf_C2H2_type"/>
</dbReference>
<dbReference type="PANTHER" id="PTHR46095">
    <property type="entry name" value="ZINC FINGER PROTEIN 593"/>
    <property type="match status" value="1"/>
</dbReference>
<dbReference type="PANTHER" id="PTHR46095:SF1">
    <property type="entry name" value="ZINC FINGER PROTEIN 593"/>
    <property type="match status" value="1"/>
</dbReference>
<dbReference type="Pfam" id="PF12171">
    <property type="entry name" value="zf-C2H2_jaz"/>
    <property type="match status" value="1"/>
</dbReference>
<dbReference type="SMART" id="SM00451">
    <property type="entry name" value="ZnF_U1"/>
    <property type="match status" value="1"/>
</dbReference>
<dbReference type="SUPFAM" id="SSF57667">
    <property type="entry name" value="beta-beta-alpha zinc fingers"/>
    <property type="match status" value="1"/>
</dbReference>
<dbReference type="PROSITE" id="PS00028">
    <property type="entry name" value="ZINC_FINGER_C2H2_1"/>
    <property type="match status" value="1"/>
</dbReference>
<dbReference type="PROSITE" id="PS50157">
    <property type="entry name" value="ZINC_FINGER_C2H2_2"/>
    <property type="match status" value="1"/>
</dbReference>
<accession>Q9DB42</accession>
<accession>Q3UZX2</accession>
<accession>Q99J54</accession>
<sequence length="134" mass="15147">MGRSRRTGAHRAHSLARQMKAKKRRPDLDEIHRELRPQGLPRPKPEPDAEPDPDLPGGGLHRCLACARYFIDSANLKTHFRSKDHKKRLKQLSVEPYSQEEAERAAGMGSYVQPQRLGVPTEVSTDIPEMDTST</sequence>
<name>ZN593_MOUSE</name>
<evidence type="ECO:0000250" key="1">
    <source>
        <dbReference type="UniProtKB" id="O00488"/>
    </source>
</evidence>
<evidence type="ECO:0000250" key="2">
    <source>
        <dbReference type="UniProtKB" id="Q08004"/>
    </source>
</evidence>
<evidence type="ECO:0000255" key="3">
    <source>
        <dbReference type="PROSITE-ProRule" id="PRU00042"/>
    </source>
</evidence>
<evidence type="ECO:0000256" key="4">
    <source>
        <dbReference type="SAM" id="MobiDB-lite"/>
    </source>
</evidence>
<evidence type="ECO:0000305" key="5"/>
<feature type="chain" id="PRO_0000047685" description="Zinc finger protein 593">
    <location>
        <begin position="1"/>
        <end position="134"/>
    </location>
</feature>
<feature type="zinc finger region" description="C2H2-type" evidence="3">
    <location>
        <begin position="61"/>
        <end position="85"/>
    </location>
</feature>
<feature type="region of interest" description="Disordered" evidence="4">
    <location>
        <begin position="1"/>
        <end position="58"/>
    </location>
</feature>
<feature type="region of interest" description="Disordered" evidence="4">
    <location>
        <begin position="85"/>
        <end position="134"/>
    </location>
</feature>
<feature type="compositionally biased region" description="Basic residues" evidence="4">
    <location>
        <begin position="1"/>
        <end position="25"/>
    </location>
</feature>
<feature type="compositionally biased region" description="Basic and acidic residues" evidence="4">
    <location>
        <begin position="26"/>
        <end position="36"/>
    </location>
</feature>
<feature type="sequence conflict" description="In Ref. 3; AAH03465." evidence="5" ref="3">
    <original>P</original>
    <variation>R</variation>
    <location>
        <position position="47"/>
    </location>
</feature>
<keyword id="KW-0963">Cytoplasm</keyword>
<keyword id="KW-0238">DNA-binding</keyword>
<keyword id="KW-0479">Metal-binding</keyword>
<keyword id="KW-0539">Nucleus</keyword>
<keyword id="KW-1185">Reference proteome</keyword>
<keyword id="KW-0690">Ribosome biogenesis</keyword>
<keyword id="KW-0804">Transcription</keyword>
<keyword id="KW-0805">Transcription regulation</keyword>
<keyword id="KW-0862">Zinc</keyword>
<keyword id="KW-0863">Zinc-finger</keyword>
<organism>
    <name type="scientific">Mus musculus</name>
    <name type="common">Mouse</name>
    <dbReference type="NCBI Taxonomy" id="10090"/>
    <lineage>
        <taxon>Eukaryota</taxon>
        <taxon>Metazoa</taxon>
        <taxon>Chordata</taxon>
        <taxon>Craniata</taxon>
        <taxon>Vertebrata</taxon>
        <taxon>Euteleostomi</taxon>
        <taxon>Mammalia</taxon>
        <taxon>Eutheria</taxon>
        <taxon>Euarchontoglires</taxon>
        <taxon>Glires</taxon>
        <taxon>Rodentia</taxon>
        <taxon>Myomorpha</taxon>
        <taxon>Muroidea</taxon>
        <taxon>Muridae</taxon>
        <taxon>Murinae</taxon>
        <taxon>Mus</taxon>
        <taxon>Mus</taxon>
    </lineage>
</organism>